<keyword id="KW-0378">Hydrolase</keyword>
<keyword id="KW-0546">Nucleotide metabolism</keyword>
<keyword id="KW-0547">Nucleotide-binding</keyword>
<keyword id="KW-1185">Reference proteome</keyword>
<organism>
    <name type="scientific">Idiomarina loihiensis (strain ATCC BAA-735 / DSM 15497 / L2-TR)</name>
    <dbReference type="NCBI Taxonomy" id="283942"/>
    <lineage>
        <taxon>Bacteria</taxon>
        <taxon>Pseudomonadati</taxon>
        <taxon>Pseudomonadota</taxon>
        <taxon>Gammaproteobacteria</taxon>
        <taxon>Alteromonadales</taxon>
        <taxon>Idiomarinaceae</taxon>
        <taxon>Idiomarina</taxon>
    </lineage>
</organism>
<feature type="chain" id="PRO_1000009741" description="dCTP deaminase">
    <location>
        <begin position="1"/>
        <end position="195"/>
    </location>
</feature>
<feature type="active site" description="Proton donor/acceptor" evidence="1">
    <location>
        <position position="138"/>
    </location>
</feature>
<feature type="binding site" evidence="1">
    <location>
        <begin position="110"/>
        <end position="115"/>
    </location>
    <ligand>
        <name>dCTP</name>
        <dbReference type="ChEBI" id="CHEBI:61481"/>
    </ligand>
</feature>
<feature type="binding site" evidence="1">
    <location>
        <position position="128"/>
    </location>
    <ligand>
        <name>dCTP</name>
        <dbReference type="ChEBI" id="CHEBI:61481"/>
    </ligand>
</feature>
<feature type="binding site" evidence="1">
    <location>
        <begin position="136"/>
        <end position="138"/>
    </location>
    <ligand>
        <name>dCTP</name>
        <dbReference type="ChEBI" id="CHEBI:61481"/>
    </ligand>
</feature>
<feature type="binding site" evidence="1">
    <location>
        <position position="171"/>
    </location>
    <ligand>
        <name>dCTP</name>
        <dbReference type="ChEBI" id="CHEBI:61481"/>
    </ligand>
</feature>
<feature type="binding site" evidence="1">
    <location>
        <position position="178"/>
    </location>
    <ligand>
        <name>dCTP</name>
        <dbReference type="ChEBI" id="CHEBI:61481"/>
    </ligand>
</feature>
<feature type="binding site" evidence="1">
    <location>
        <position position="182"/>
    </location>
    <ligand>
        <name>dCTP</name>
        <dbReference type="ChEBI" id="CHEBI:61481"/>
    </ligand>
</feature>
<proteinExistence type="inferred from homology"/>
<evidence type="ECO:0000255" key="1">
    <source>
        <dbReference type="HAMAP-Rule" id="MF_00146"/>
    </source>
</evidence>
<gene>
    <name evidence="1" type="primary">dcd</name>
    <name type="ordered locus">IL0709</name>
</gene>
<sequence length="195" mass="21222">MRLNDTEIEQHLKDGIIGVEPAPQANNISGVTLDIHLGNDFRVLQDHAAPFIDISGSREAIEAAIQEVMSDEIVLKDDQAFFIHPGEFALAVTHESITLPADMVGWLDGRSSLARLGLMVHVTAHRIDPGWSGQIVLEFFNSGKLPLALRAGMKIGAISFEKLSGPCARPYNKREDAKYRDQHSAVASRISADGG</sequence>
<name>DCD_IDILO</name>
<comment type="function">
    <text evidence="1">Catalyzes the deamination of dCTP to dUTP.</text>
</comment>
<comment type="catalytic activity">
    <reaction evidence="1">
        <text>dCTP + H2O + H(+) = dUTP + NH4(+)</text>
        <dbReference type="Rhea" id="RHEA:22680"/>
        <dbReference type="ChEBI" id="CHEBI:15377"/>
        <dbReference type="ChEBI" id="CHEBI:15378"/>
        <dbReference type="ChEBI" id="CHEBI:28938"/>
        <dbReference type="ChEBI" id="CHEBI:61481"/>
        <dbReference type="ChEBI" id="CHEBI:61555"/>
        <dbReference type="EC" id="3.5.4.13"/>
    </reaction>
</comment>
<comment type="pathway">
    <text evidence="1">Pyrimidine metabolism; dUMP biosynthesis; dUMP from dCTP (dUTP route): step 1/2.</text>
</comment>
<comment type="subunit">
    <text evidence="1">Homotrimer.</text>
</comment>
<comment type="similarity">
    <text evidence="1">Belongs to the dCTP deaminase family.</text>
</comment>
<accession>Q5R0F4</accession>
<dbReference type="EC" id="3.5.4.13" evidence="1"/>
<dbReference type="EMBL" id="AE017340">
    <property type="protein sequence ID" value="AAV81550.1"/>
    <property type="molecule type" value="Genomic_DNA"/>
</dbReference>
<dbReference type="RefSeq" id="WP_011233961.1">
    <property type="nucleotide sequence ID" value="NC_006512.1"/>
</dbReference>
<dbReference type="SMR" id="Q5R0F4"/>
<dbReference type="STRING" id="283942.IL0709"/>
<dbReference type="GeneID" id="41335863"/>
<dbReference type="KEGG" id="ilo:IL0709"/>
<dbReference type="eggNOG" id="COG0717">
    <property type="taxonomic scope" value="Bacteria"/>
</dbReference>
<dbReference type="HOGENOM" id="CLU_087476_2_0_6"/>
<dbReference type="OrthoDB" id="9780956at2"/>
<dbReference type="UniPathway" id="UPA00610">
    <property type="reaction ID" value="UER00665"/>
</dbReference>
<dbReference type="Proteomes" id="UP000001171">
    <property type="component" value="Chromosome"/>
</dbReference>
<dbReference type="GO" id="GO:0008829">
    <property type="term" value="F:dCTP deaminase activity"/>
    <property type="evidence" value="ECO:0007669"/>
    <property type="project" value="UniProtKB-UniRule"/>
</dbReference>
<dbReference type="GO" id="GO:0000166">
    <property type="term" value="F:nucleotide binding"/>
    <property type="evidence" value="ECO:0007669"/>
    <property type="project" value="UniProtKB-KW"/>
</dbReference>
<dbReference type="GO" id="GO:0006226">
    <property type="term" value="P:dUMP biosynthetic process"/>
    <property type="evidence" value="ECO:0007669"/>
    <property type="project" value="UniProtKB-UniPathway"/>
</dbReference>
<dbReference type="GO" id="GO:0006229">
    <property type="term" value="P:dUTP biosynthetic process"/>
    <property type="evidence" value="ECO:0007669"/>
    <property type="project" value="UniProtKB-UniRule"/>
</dbReference>
<dbReference type="GO" id="GO:0015949">
    <property type="term" value="P:nucleobase-containing small molecule interconversion"/>
    <property type="evidence" value="ECO:0007669"/>
    <property type="project" value="TreeGrafter"/>
</dbReference>
<dbReference type="CDD" id="cd07557">
    <property type="entry name" value="trimeric_dUTPase"/>
    <property type="match status" value="1"/>
</dbReference>
<dbReference type="FunFam" id="2.70.40.10:FF:000003">
    <property type="entry name" value="dCTP deaminase"/>
    <property type="match status" value="1"/>
</dbReference>
<dbReference type="Gene3D" id="2.70.40.10">
    <property type="match status" value="1"/>
</dbReference>
<dbReference type="HAMAP" id="MF_00146">
    <property type="entry name" value="dCTP_deaminase"/>
    <property type="match status" value="1"/>
</dbReference>
<dbReference type="InterPro" id="IPR011962">
    <property type="entry name" value="dCTP_deaminase"/>
</dbReference>
<dbReference type="InterPro" id="IPR036157">
    <property type="entry name" value="dUTPase-like_sf"/>
</dbReference>
<dbReference type="InterPro" id="IPR033704">
    <property type="entry name" value="dUTPase_trimeric"/>
</dbReference>
<dbReference type="NCBIfam" id="TIGR02274">
    <property type="entry name" value="dCTP_deam"/>
    <property type="match status" value="1"/>
</dbReference>
<dbReference type="PANTHER" id="PTHR42680">
    <property type="entry name" value="DCTP DEAMINASE"/>
    <property type="match status" value="1"/>
</dbReference>
<dbReference type="PANTHER" id="PTHR42680:SF3">
    <property type="entry name" value="DCTP DEAMINASE"/>
    <property type="match status" value="1"/>
</dbReference>
<dbReference type="Pfam" id="PF22769">
    <property type="entry name" value="DCD"/>
    <property type="match status" value="1"/>
</dbReference>
<dbReference type="SUPFAM" id="SSF51283">
    <property type="entry name" value="dUTPase-like"/>
    <property type="match status" value="1"/>
</dbReference>
<reference key="1">
    <citation type="journal article" date="2004" name="Proc. Natl. Acad. Sci. U.S.A.">
        <title>Genome sequence of the deep-sea gamma-proteobacterium Idiomarina loihiensis reveals amino acid fermentation as a source of carbon and energy.</title>
        <authorList>
            <person name="Hou S."/>
            <person name="Saw J.H."/>
            <person name="Lee K.S."/>
            <person name="Freitas T.A."/>
            <person name="Belisle C."/>
            <person name="Kawarabayasi Y."/>
            <person name="Donachie S.P."/>
            <person name="Pikina A."/>
            <person name="Galperin M.Y."/>
            <person name="Koonin E.V."/>
            <person name="Makarova K.S."/>
            <person name="Omelchenko M.V."/>
            <person name="Sorokin A."/>
            <person name="Wolf Y.I."/>
            <person name="Li Q.X."/>
            <person name="Keum Y.S."/>
            <person name="Campbell S."/>
            <person name="Denery J."/>
            <person name="Aizawa S."/>
            <person name="Shibata S."/>
            <person name="Malahoff A."/>
            <person name="Alam M."/>
        </authorList>
    </citation>
    <scope>NUCLEOTIDE SEQUENCE [LARGE SCALE GENOMIC DNA]</scope>
    <source>
        <strain>ATCC BAA-735 / DSM 15497 / L2-TR</strain>
    </source>
</reference>
<protein>
    <recommendedName>
        <fullName evidence="1">dCTP deaminase</fullName>
        <ecNumber evidence="1">3.5.4.13</ecNumber>
    </recommendedName>
    <alternativeName>
        <fullName evidence="1">Deoxycytidine triphosphate deaminase</fullName>
    </alternativeName>
</protein>